<keyword id="KW-0159">Chromosome partition</keyword>
<keyword id="KW-0507">mRNA processing</keyword>
<keyword id="KW-0539">Nucleus</keyword>
<keyword id="KW-1185">Reference proteome</keyword>
<keyword id="KW-0677">Repeat</keyword>
<keyword id="KW-0853">WD repeat</keyword>
<evidence type="ECO:0000250" key="1"/>
<evidence type="ECO:0000256" key="2">
    <source>
        <dbReference type="SAM" id="MobiDB-lite"/>
    </source>
</evidence>
<feature type="chain" id="PRO_0000238505" description="Polyadenylation factor subunit 2">
    <location>
        <begin position="1"/>
        <end position="660"/>
    </location>
</feature>
<feature type="repeat" description="WD 1">
    <location>
        <begin position="94"/>
        <end position="133"/>
    </location>
</feature>
<feature type="repeat" description="WD 2">
    <location>
        <begin position="136"/>
        <end position="176"/>
    </location>
</feature>
<feature type="repeat" description="WD 3">
    <location>
        <begin position="177"/>
        <end position="216"/>
    </location>
</feature>
<feature type="repeat" description="WD 4">
    <location>
        <begin position="219"/>
        <end position="258"/>
    </location>
</feature>
<feature type="repeat" description="WD 5">
    <location>
        <begin position="261"/>
        <end position="301"/>
    </location>
</feature>
<feature type="repeat" description="WD 6">
    <location>
        <begin position="304"/>
        <end position="344"/>
    </location>
</feature>
<feature type="repeat" description="WD 7">
    <location>
        <begin position="376"/>
        <end position="415"/>
    </location>
</feature>
<feature type="region of interest" description="Disordered" evidence="2">
    <location>
        <begin position="1"/>
        <end position="32"/>
    </location>
</feature>
<feature type="region of interest" description="Disordered" evidence="2">
    <location>
        <begin position="562"/>
        <end position="660"/>
    </location>
</feature>
<feature type="compositionally biased region" description="Basic and acidic residues" evidence="2">
    <location>
        <begin position="1"/>
        <end position="12"/>
    </location>
</feature>
<feature type="compositionally biased region" description="Pro residues" evidence="2">
    <location>
        <begin position="566"/>
        <end position="610"/>
    </location>
</feature>
<organism>
    <name type="scientific">Neurospora crassa (strain ATCC 24698 / 74-OR23-1A / CBS 708.71 / DSM 1257 / FGSC 987)</name>
    <dbReference type="NCBI Taxonomy" id="367110"/>
    <lineage>
        <taxon>Eukaryota</taxon>
        <taxon>Fungi</taxon>
        <taxon>Dikarya</taxon>
        <taxon>Ascomycota</taxon>
        <taxon>Pezizomycotina</taxon>
        <taxon>Sordariomycetes</taxon>
        <taxon>Sordariomycetidae</taxon>
        <taxon>Sordariales</taxon>
        <taxon>Sordariaceae</taxon>
        <taxon>Neurospora</taxon>
    </lineage>
</organism>
<name>PFS2_NEUCR</name>
<protein>
    <recommendedName>
        <fullName>Polyadenylation factor subunit 2</fullName>
    </recommendedName>
</protein>
<reference key="1">
    <citation type="journal article" date="2003" name="Nature">
        <title>The genome sequence of the filamentous fungus Neurospora crassa.</title>
        <authorList>
            <person name="Galagan J.E."/>
            <person name="Calvo S.E."/>
            <person name="Borkovich K.A."/>
            <person name="Selker E.U."/>
            <person name="Read N.D."/>
            <person name="Jaffe D.B."/>
            <person name="FitzHugh W."/>
            <person name="Ma L.-J."/>
            <person name="Smirnov S."/>
            <person name="Purcell S."/>
            <person name="Rehman B."/>
            <person name="Elkins T."/>
            <person name="Engels R."/>
            <person name="Wang S."/>
            <person name="Nielsen C.B."/>
            <person name="Butler J."/>
            <person name="Endrizzi M."/>
            <person name="Qui D."/>
            <person name="Ianakiev P."/>
            <person name="Bell-Pedersen D."/>
            <person name="Nelson M.A."/>
            <person name="Werner-Washburne M."/>
            <person name="Selitrennikoff C.P."/>
            <person name="Kinsey J.A."/>
            <person name="Braun E.L."/>
            <person name="Zelter A."/>
            <person name="Schulte U."/>
            <person name="Kothe G.O."/>
            <person name="Jedd G."/>
            <person name="Mewes H.-W."/>
            <person name="Staben C."/>
            <person name="Marcotte E."/>
            <person name="Greenberg D."/>
            <person name="Roy A."/>
            <person name="Foley K."/>
            <person name="Naylor J."/>
            <person name="Stange-Thomann N."/>
            <person name="Barrett R."/>
            <person name="Gnerre S."/>
            <person name="Kamal M."/>
            <person name="Kamvysselis M."/>
            <person name="Mauceli E.W."/>
            <person name="Bielke C."/>
            <person name="Rudd S."/>
            <person name="Frishman D."/>
            <person name="Krystofova S."/>
            <person name="Rasmussen C."/>
            <person name="Metzenberg R.L."/>
            <person name="Perkins D.D."/>
            <person name="Kroken S."/>
            <person name="Cogoni C."/>
            <person name="Macino G."/>
            <person name="Catcheside D.E.A."/>
            <person name="Li W."/>
            <person name="Pratt R.J."/>
            <person name="Osmani S.A."/>
            <person name="DeSouza C.P.C."/>
            <person name="Glass N.L."/>
            <person name="Orbach M.J."/>
            <person name="Berglund J.A."/>
            <person name="Voelker R."/>
            <person name="Yarden O."/>
            <person name="Plamann M."/>
            <person name="Seiler S."/>
            <person name="Dunlap J.C."/>
            <person name="Radford A."/>
            <person name="Aramayo R."/>
            <person name="Natvig D.O."/>
            <person name="Alex L.A."/>
            <person name="Mannhaupt G."/>
            <person name="Ebbole D.J."/>
            <person name="Freitag M."/>
            <person name="Paulsen I."/>
            <person name="Sachs M.S."/>
            <person name="Lander E.S."/>
            <person name="Nusbaum C."/>
            <person name="Birren B.W."/>
        </authorList>
    </citation>
    <scope>NUCLEOTIDE SEQUENCE [LARGE SCALE GENOMIC DNA]</scope>
    <source>
        <strain>ATCC 24698 / 74-OR23-1A / CBS 708.71 / DSM 1257 / FGSC 987</strain>
    </source>
</reference>
<sequence>MSYEPRGDHDKGYGGGGGHDGLPPRNRGRRPVTDYGASVVHYMRHRQPRYRGSYAGEVERPSPSYIVDMLPPYARVTNPADSVPSRHLHSSLNKIKHPINVVRWTPEGRRLLTASSSGEFTLWNGTGFNFETIMQAHDSAIRALVYSHSDDWLVSADHDGIIKYWQPNFNNVESIRGHTDPIRDLAFSPNDTKFVTASDDQTLKVFDFAGGSTDMTLTGHGWDAKSCDWHPSRGLIVSGSKDHLVKLWDPRTGRCLTTLHGHKNTITKTLFERVQGNCLATSARDQTARVFDLRMMRDIALLRGHEKDISTLTWHPVHSNLLSTGGSDGSLFHYLLDEPNTAPDGSVMPIPAVYDTADPSSAPAQPIYPAHKIPYAHDFAIWSLDWHPLGHILASGSNDRITRFWSRARPGEAPESFNDRYHIGEAAAEAQGTWDRRGGRHMRQVEEEQELEDEMDGLVDQKMPIKGQPGVGGGGMMPGLSFPSIPGLPLQQVPSSGPGGSGFIPPPPIIPGVGGATGVPPPLPFPIPGMPGLPAGVVPPPLPGLDLKNPPDFSALAEMMKKAGYQPPPPPGSAGAPMPPPGILPPGLIPPPGAAGFPMPPPGFAPPPLIPGAGGPPGGATHPDGGNDQYDSSGRRRAPLPSQEESLRMEQSKGNYTRVR</sequence>
<comment type="function">
    <text evidence="1">Required for 3'-end cleavage and polyadenylation of pre-mRNAs. Also involved in chromosome segregation where it has a role in chromosome attachment to the mitotic spindle (By similarity).</text>
</comment>
<comment type="subcellular location">
    <subcellularLocation>
        <location evidence="1">Nucleus</location>
    </subcellularLocation>
</comment>
<proteinExistence type="inferred from homology"/>
<accession>Q7RY68</accession>
<accession>U9W884</accession>
<gene>
    <name type="primary">paa-1</name>
    <name type="synonym">pfs2</name>
    <name type="ORF">NCU00037</name>
</gene>
<dbReference type="EMBL" id="CM002238">
    <property type="protein sequence ID" value="ESA43240.1"/>
    <property type="molecule type" value="Genomic_DNA"/>
</dbReference>
<dbReference type="RefSeq" id="XP_011393733.1">
    <property type="nucleotide sequence ID" value="XM_011395431.1"/>
</dbReference>
<dbReference type="SMR" id="Q7RY68"/>
<dbReference type="FunCoup" id="Q7RY68">
    <property type="interactions" value="216"/>
</dbReference>
<dbReference type="STRING" id="367110.Q7RY68"/>
<dbReference type="PaxDb" id="5141-EFNCRP00000000117"/>
<dbReference type="EnsemblFungi" id="ESA43240">
    <property type="protein sequence ID" value="ESA43240"/>
    <property type="gene ID" value="NCU00037"/>
</dbReference>
<dbReference type="GeneID" id="3873162"/>
<dbReference type="KEGG" id="ncr:NCU00037"/>
<dbReference type="VEuPathDB" id="FungiDB:NCU00037"/>
<dbReference type="HOGENOM" id="CLU_000288_77_1_1"/>
<dbReference type="InParanoid" id="Q7RY68"/>
<dbReference type="OrthoDB" id="16717at2759"/>
<dbReference type="Proteomes" id="UP000001805">
    <property type="component" value="Chromosome 3, Linkage Group III"/>
</dbReference>
<dbReference type="GO" id="GO:0005847">
    <property type="term" value="C:mRNA cleavage and polyadenylation specificity factor complex"/>
    <property type="evidence" value="ECO:0000318"/>
    <property type="project" value="GO_Central"/>
</dbReference>
<dbReference type="GO" id="GO:0007059">
    <property type="term" value="P:chromosome segregation"/>
    <property type="evidence" value="ECO:0007669"/>
    <property type="project" value="UniProtKB-KW"/>
</dbReference>
<dbReference type="GO" id="GO:0031124">
    <property type="term" value="P:mRNA 3'-end processing"/>
    <property type="evidence" value="ECO:0007669"/>
    <property type="project" value="InterPro"/>
</dbReference>
<dbReference type="CDD" id="cd00200">
    <property type="entry name" value="WD40"/>
    <property type="match status" value="1"/>
</dbReference>
<dbReference type="FunFam" id="2.130.10.10:FF:001039">
    <property type="entry name" value="Polyadenylation factor subunit 2"/>
    <property type="match status" value="1"/>
</dbReference>
<dbReference type="FunFam" id="2.130.10.10:FF:002008">
    <property type="entry name" value="Polyadenylation factor subunit 2"/>
    <property type="match status" value="1"/>
</dbReference>
<dbReference type="Gene3D" id="2.130.10.10">
    <property type="entry name" value="YVTN repeat-like/Quinoprotein amine dehydrogenase"/>
    <property type="match status" value="3"/>
</dbReference>
<dbReference type="InterPro" id="IPR045245">
    <property type="entry name" value="Pfs2-like"/>
</dbReference>
<dbReference type="InterPro" id="IPR015943">
    <property type="entry name" value="WD40/YVTN_repeat-like_dom_sf"/>
</dbReference>
<dbReference type="InterPro" id="IPR036322">
    <property type="entry name" value="WD40_repeat_dom_sf"/>
</dbReference>
<dbReference type="InterPro" id="IPR001680">
    <property type="entry name" value="WD40_rpt"/>
</dbReference>
<dbReference type="PANTHER" id="PTHR22836:SF0">
    <property type="entry name" value="PRE-MRNA 3' END PROCESSING PROTEIN WDR33"/>
    <property type="match status" value="1"/>
</dbReference>
<dbReference type="PANTHER" id="PTHR22836">
    <property type="entry name" value="WD40 REPEAT PROTEIN"/>
    <property type="match status" value="1"/>
</dbReference>
<dbReference type="Pfam" id="PF00400">
    <property type="entry name" value="WD40"/>
    <property type="match status" value="6"/>
</dbReference>
<dbReference type="SMART" id="SM00320">
    <property type="entry name" value="WD40"/>
    <property type="match status" value="7"/>
</dbReference>
<dbReference type="SUPFAM" id="SSF50978">
    <property type="entry name" value="WD40 repeat-like"/>
    <property type="match status" value="1"/>
</dbReference>
<dbReference type="PROSITE" id="PS50082">
    <property type="entry name" value="WD_REPEATS_2"/>
    <property type="match status" value="6"/>
</dbReference>
<dbReference type="PROSITE" id="PS50294">
    <property type="entry name" value="WD_REPEATS_REGION"/>
    <property type="match status" value="1"/>
</dbReference>